<protein>
    <recommendedName>
        <fullName evidence="5">Glyoxalase domain-containing protein RDO1</fullName>
    </recommendedName>
    <alternativeName>
        <fullName evidence="5">Itaconic acid/2-hydroxyparaconate biosynthesis cluster protein RDO1</fullName>
    </alternativeName>
    <alternativeName>
        <fullName evidence="4">Putative ring-cleaving dioxygenase 1</fullName>
    </alternativeName>
</protein>
<reference key="1">
    <citation type="journal article" date="2016" name="Microb. Biotechnol.">
        <title>Ustilago maydis produces itaconic acid via the unusual intermediate trans-aconitate.</title>
        <authorList>
            <person name="Geiser E."/>
            <person name="Przybilla S.K."/>
            <person name="Friedrich A."/>
            <person name="Buckel W."/>
            <person name="Wierckx N."/>
            <person name="Blank L.M."/>
            <person name="Boelker M."/>
        </authorList>
    </citation>
    <scope>NUCLEOTIDE SEQUENCE [GENOMIC DNA]</scope>
    <scope>FUNCTION</scope>
    <scope>DISRUPTION PHENOTYPE</scope>
    <source>
        <strain>MB215</strain>
    </source>
</reference>
<reference key="2">
    <citation type="journal article" date="2016" name="Metab. Eng.">
        <title>Genetic and biochemical insights into the itaconate pathway of Ustilago maydis enable enhanced production.</title>
        <authorList>
            <person name="Geiser E."/>
            <person name="Przybilla S.K."/>
            <person name="Engel M."/>
            <person name="Kleineberg W."/>
            <person name="Buettner L."/>
            <person name="Sarikaya E."/>
            <person name="Hartog T.D."/>
            <person name="Klankermayer J."/>
            <person name="Leitner W."/>
            <person name="Boelker M."/>
            <person name="Blank L.M."/>
            <person name="Wierckx N."/>
        </authorList>
    </citation>
    <scope>FUNCTION</scope>
    <scope>DISRUPTION PHENOTYPE</scope>
</reference>
<proteinExistence type="inferred from homology"/>
<organism>
    <name type="scientific">Mycosarcoma maydis</name>
    <name type="common">Corn smut fungus</name>
    <name type="synonym">Ustilago maydis</name>
    <dbReference type="NCBI Taxonomy" id="5270"/>
    <lineage>
        <taxon>Eukaryota</taxon>
        <taxon>Fungi</taxon>
        <taxon>Dikarya</taxon>
        <taxon>Basidiomycota</taxon>
        <taxon>Ustilaginomycotina</taxon>
        <taxon>Ustilaginomycetes</taxon>
        <taxon>Ustilaginales</taxon>
        <taxon>Ustilaginaceae</taxon>
        <taxon>Mycosarcoma</taxon>
    </lineage>
</organism>
<name>RDO1_MYCMD</name>
<feature type="chain" id="PRO_0000438679" description="Glyoxalase domain-containing protein RDO1">
    <location>
        <begin position="1"/>
        <end position="176"/>
    </location>
</feature>
<feature type="domain" description="VOC" evidence="1">
    <location>
        <begin position="53"/>
        <end position="172"/>
    </location>
</feature>
<feature type="active site" description="Proton donor/acceptor" evidence="1">
    <location>
        <position position="168"/>
    </location>
</feature>
<gene>
    <name evidence="4" type="primary">RDO1</name>
    <name type="ORF">UMAG_12299</name>
</gene>
<comment type="function">
    <text evidence="2 3">Glyoxalase domain-containing protein; part of the gene cluster that mediates the biosynthesis of itaconic acid and 2-hydroxyparaconate (PubMed:26639528, PubMed:27750034). Cis-aconitate is secreted by the mitochondrial tricarboxylate transporter MTT1. In the cytosol cis-aconitate is converted into trans-aconitate via isomerization by the aconitate-delta-isomerase ADI1 (PubMed:26639528). Decarboxylation of trans-aconitate by the trans-aconitate decarboxylase TAD1 then leads then to the production of itaconic acid (PubMed:26639528). The cytochrome P450 monooxygenase CYP3 further converts itaconate to 2-hydroxyparaconate via oxidation of the double bond, leading to a transient epoxide, which can subsequently be lactonized to produce 2-hydroxyparaconate (PubMed:27750034). Secretion of itaconate and possibly 2-hydroxyparaconate into the medium is mediated by the major facilitator ITP1 (PubMed:26639528, PubMed:27750034). The glyoxalase domain-containing protein RDO1 is not involved in the biosynthesis of itaconate and 2-hydroxyparaconate, however, it might play a role in the further conversion of 2-hydroxyparaconate to itatartarate (PubMed:27750034).</text>
</comment>
<comment type="pathway">
    <text evidence="6">Secondary metabolite biosynthesis.</text>
</comment>
<comment type="disruption phenotype">
    <text evidence="2 3">Does not affect the itaconic acid nor 2-hydroxyparaconate production (PubMed:26639528, PubMed:27750034).</text>
</comment>
<comment type="similarity">
    <text evidence="5">Belongs to the glyoxalase I family.</text>
</comment>
<accession>A0A0U2WCB2</accession>
<dbReference type="EMBL" id="KT852988">
    <property type="protein sequence ID" value="ALS30794.1"/>
    <property type="molecule type" value="Genomic_DNA"/>
</dbReference>
<dbReference type="SMR" id="A0A0U2WCB2"/>
<dbReference type="VEuPathDB" id="FungiDB:UMAG_12299"/>
<dbReference type="BioCyc" id="MetaCyc:MONOMER-20622"/>
<dbReference type="CDD" id="cd07253">
    <property type="entry name" value="GLOD5"/>
    <property type="match status" value="1"/>
</dbReference>
<dbReference type="Gene3D" id="3.10.180.10">
    <property type="entry name" value="2,3-Dihydroxybiphenyl 1,2-Dioxygenase, domain 1"/>
    <property type="match status" value="1"/>
</dbReference>
<dbReference type="InterPro" id="IPR029068">
    <property type="entry name" value="Glyas_Bleomycin-R_OHBP_Dase"/>
</dbReference>
<dbReference type="InterPro" id="IPR004360">
    <property type="entry name" value="Glyas_Fos-R_dOase_dom"/>
</dbReference>
<dbReference type="InterPro" id="IPR050383">
    <property type="entry name" value="GlyoxalaseI/FosfomycinResist"/>
</dbReference>
<dbReference type="InterPro" id="IPR037523">
    <property type="entry name" value="VOC"/>
</dbReference>
<dbReference type="PANTHER" id="PTHR21366:SF14">
    <property type="entry name" value="GLYOXALASE DOMAIN-CONTAINING PROTEIN 5"/>
    <property type="match status" value="1"/>
</dbReference>
<dbReference type="PANTHER" id="PTHR21366">
    <property type="entry name" value="GLYOXALASE FAMILY PROTEIN"/>
    <property type="match status" value="1"/>
</dbReference>
<dbReference type="Pfam" id="PF00903">
    <property type="entry name" value="Glyoxalase"/>
    <property type="match status" value="1"/>
</dbReference>
<dbReference type="SUPFAM" id="SSF54593">
    <property type="entry name" value="Glyoxalase/Bleomycin resistance protein/Dihydroxybiphenyl dioxygenase"/>
    <property type="match status" value="1"/>
</dbReference>
<dbReference type="PROSITE" id="PS51819">
    <property type="entry name" value="VOC"/>
    <property type="match status" value="1"/>
</dbReference>
<sequence length="176" mass="19721">MLRSSQARSVVRSSQWATTARVHQLELPSGWKPSALGVAPWQQRQQRQLSVRSLDHLVITCHDMDKTIDFYTRLGMSVVQFGQGRKALEFGSQKINLHQKGKEFEPKALVPQPGSQDLCFVIHDSIADAQKHLQEHGIQVVEGPVKRTGAVGPILSIYVRDPDNNLIELSSYQDAK</sequence>
<evidence type="ECO:0000255" key="1">
    <source>
        <dbReference type="PROSITE-ProRule" id="PRU01163"/>
    </source>
</evidence>
<evidence type="ECO:0000269" key="2">
    <source>
    </source>
</evidence>
<evidence type="ECO:0000269" key="3">
    <source>
    </source>
</evidence>
<evidence type="ECO:0000303" key="4">
    <source>
    </source>
</evidence>
<evidence type="ECO:0000305" key="5"/>
<evidence type="ECO:0000305" key="6">
    <source>
    </source>
</evidence>